<organism>
    <name type="scientific">Homo sapiens</name>
    <name type="common">Human</name>
    <dbReference type="NCBI Taxonomy" id="9606"/>
    <lineage>
        <taxon>Eukaryota</taxon>
        <taxon>Metazoa</taxon>
        <taxon>Chordata</taxon>
        <taxon>Craniata</taxon>
        <taxon>Vertebrata</taxon>
        <taxon>Euteleostomi</taxon>
        <taxon>Mammalia</taxon>
        <taxon>Eutheria</taxon>
        <taxon>Euarchontoglires</taxon>
        <taxon>Primates</taxon>
        <taxon>Haplorrhini</taxon>
        <taxon>Catarrhini</taxon>
        <taxon>Hominidae</taxon>
        <taxon>Homo</taxon>
    </lineage>
</organism>
<sequence>MMARRDPKSWAKRLVRAQTLQKQRRAPVGPRAPPPDEEDPRLKCKNCGAFGHTARSTRCPMKCWKAALVPATLGKKEGKENLKPWKPRVEANPGPLNKDKGEKEERPRQQDPQRKALLHMFSGKPPEKPLPNGKGSTESSDHLRVASGPMPVHTTSKRPRVDPVLADRSAAEMSGRGSVLASLSPLRKASLSSSSSLGPKERQTGAAADMPQPAVRHQGREPLLVVKPTHSSPEGGCREVPQAASKTHGLLQAARPQAQDKRPAVTSQPCPPAATHSLGLGSNLSFGPGAKRPAQAPIQACLKFPKKPRLGPFQIPESAIQGGELGAPGNLQPPPAATELGPSTSPQMGRRTPAQVPSVDWQPPHSTPCLPTAQACTMSHHSAASHDGAQPLRVLFRRLENGRWSSSLLAAPSFHSPEKPGAFLAQSPHVSEKSEAPCVRVPPSVLYEDLQVSSSSEDSDSDLE</sequence>
<comment type="similarity">
    <text evidence="2">Belongs to the FAM90 family.</text>
</comment>
<gene>
    <name evidence="3" type="primary">FAM90A18</name>
    <name type="synonym">FAM90A18P</name>
</gene>
<protein>
    <recommendedName>
        <fullName>Protein FAM90A18</fullName>
    </recommendedName>
</protein>
<feature type="chain" id="PRO_0000299597" description="Protein FAM90A18">
    <location>
        <begin position="1"/>
        <end position="464"/>
    </location>
</feature>
<feature type="region of interest" description="Disordered" evidence="1">
    <location>
        <begin position="1"/>
        <end position="42"/>
    </location>
</feature>
<feature type="region of interest" description="Disordered" evidence="1">
    <location>
        <begin position="70"/>
        <end position="387"/>
    </location>
</feature>
<feature type="region of interest" description="Disordered" evidence="1">
    <location>
        <begin position="415"/>
        <end position="437"/>
    </location>
</feature>
<feature type="compositionally biased region" description="Basic and acidic residues" evidence="1">
    <location>
        <begin position="74"/>
        <end position="89"/>
    </location>
</feature>
<feature type="compositionally biased region" description="Basic and acidic residues" evidence="1">
    <location>
        <begin position="97"/>
        <end position="114"/>
    </location>
</feature>
<feature type="compositionally biased region" description="Low complexity" evidence="1">
    <location>
        <begin position="180"/>
        <end position="197"/>
    </location>
</feature>
<reference key="1">
    <citation type="journal article" date="2006" name="Nature">
        <title>DNA sequence and analysis of human chromosome 8.</title>
        <authorList>
            <person name="Nusbaum C."/>
            <person name="Mikkelsen T.S."/>
            <person name="Zody M.C."/>
            <person name="Asakawa S."/>
            <person name="Taudien S."/>
            <person name="Garber M."/>
            <person name="Kodira C.D."/>
            <person name="Schueler M.G."/>
            <person name="Shimizu A."/>
            <person name="Whittaker C.A."/>
            <person name="Chang J.L."/>
            <person name="Cuomo C.A."/>
            <person name="Dewar K."/>
            <person name="FitzGerald M.G."/>
            <person name="Yang X."/>
            <person name="Allen N.R."/>
            <person name="Anderson S."/>
            <person name="Asakawa T."/>
            <person name="Blechschmidt K."/>
            <person name="Bloom T."/>
            <person name="Borowsky M.L."/>
            <person name="Butler J."/>
            <person name="Cook A."/>
            <person name="Corum B."/>
            <person name="DeArellano K."/>
            <person name="DeCaprio D."/>
            <person name="Dooley K.T."/>
            <person name="Dorris L. III"/>
            <person name="Engels R."/>
            <person name="Gloeckner G."/>
            <person name="Hafez N."/>
            <person name="Hagopian D.S."/>
            <person name="Hall J.L."/>
            <person name="Ishikawa S.K."/>
            <person name="Jaffe D.B."/>
            <person name="Kamat A."/>
            <person name="Kudoh J."/>
            <person name="Lehmann R."/>
            <person name="Lokitsang T."/>
            <person name="Macdonald P."/>
            <person name="Major J.E."/>
            <person name="Matthews C.D."/>
            <person name="Mauceli E."/>
            <person name="Menzel U."/>
            <person name="Mihalev A.H."/>
            <person name="Minoshima S."/>
            <person name="Murayama Y."/>
            <person name="Naylor J.W."/>
            <person name="Nicol R."/>
            <person name="Nguyen C."/>
            <person name="O'Leary S.B."/>
            <person name="O'Neill K."/>
            <person name="Parker S.C.J."/>
            <person name="Polley A."/>
            <person name="Raymond C.K."/>
            <person name="Reichwald K."/>
            <person name="Rodriguez J."/>
            <person name="Sasaki T."/>
            <person name="Schilhabel M."/>
            <person name="Siddiqui R."/>
            <person name="Smith C.L."/>
            <person name="Sneddon T.P."/>
            <person name="Talamas J.A."/>
            <person name="Tenzin P."/>
            <person name="Topham K."/>
            <person name="Venkataraman V."/>
            <person name="Wen G."/>
            <person name="Yamazaki S."/>
            <person name="Young S.K."/>
            <person name="Zeng Q."/>
            <person name="Zimmer A.R."/>
            <person name="Rosenthal A."/>
            <person name="Birren B.W."/>
            <person name="Platzer M."/>
            <person name="Shimizu N."/>
            <person name="Lander E.S."/>
        </authorList>
    </citation>
    <scope>NUCLEOTIDE SEQUENCE [LARGE SCALE GENOMIC DNA]</scope>
</reference>
<dbReference type="EMBL" id="AC084121">
    <property type="status" value="NOT_ANNOTATED_CDS"/>
    <property type="molecule type" value="Genomic_DNA"/>
</dbReference>
<dbReference type="RefSeq" id="NP_001157923.1">
    <property type="nucleotide sequence ID" value="NM_001164451.1"/>
</dbReference>
<dbReference type="SMR" id="P0DV75"/>
<dbReference type="iPTMnet" id="P0DV75"/>
<dbReference type="PhosphoSitePlus" id="P0DV75"/>
<dbReference type="Ensembl" id="ENST00000647769.1">
    <property type="protein sequence ID" value="ENSP00000497429.1"/>
    <property type="gene ID" value="ENSG00000285913.1"/>
</dbReference>
<dbReference type="GeneID" id="441326"/>
<dbReference type="MANE-Select" id="ENST00000647769.1">
    <property type="protein sequence ID" value="ENSP00000497429.1"/>
    <property type="RefSeq nucleotide sequence ID" value="NM_001164451.1"/>
    <property type="RefSeq protein sequence ID" value="NP_001157923.1"/>
</dbReference>
<dbReference type="AGR" id="HGNC:32266"/>
<dbReference type="GeneCards" id="FAM90A18"/>
<dbReference type="HGNC" id="HGNC:32266">
    <property type="gene designation" value="FAM90A18"/>
</dbReference>
<dbReference type="HPA" id="ENSG00000285913">
    <property type="expression patterns" value="Not detected"/>
</dbReference>
<dbReference type="MIM" id="613052">
    <property type="type" value="gene"/>
</dbReference>
<dbReference type="PRO" id="PR:P0DV75"/>
<dbReference type="Proteomes" id="UP000005640">
    <property type="component" value="Chromosome 8"/>
</dbReference>
<dbReference type="InterPro" id="IPR039213">
    <property type="entry name" value="FAM90"/>
</dbReference>
<dbReference type="InterPro" id="IPR041670">
    <property type="entry name" value="Znf-CCHC_6"/>
</dbReference>
<dbReference type="PANTHER" id="PTHR16035:SF14">
    <property type="entry name" value="FAMILY WITH SEQUENCE SIMILARITY 90 MEMBER A11, PSEUDOGENE-RELATED"/>
    <property type="match status" value="1"/>
</dbReference>
<dbReference type="PANTHER" id="PTHR16035">
    <property type="entry name" value="PROTEIN FAM90A1"/>
    <property type="match status" value="1"/>
</dbReference>
<dbReference type="Pfam" id="PF15288">
    <property type="entry name" value="zf-CCHC_6"/>
    <property type="match status" value="1"/>
</dbReference>
<evidence type="ECO:0000256" key="1">
    <source>
        <dbReference type="SAM" id="MobiDB-lite"/>
    </source>
</evidence>
<evidence type="ECO:0000305" key="2"/>
<evidence type="ECO:0000312" key="3">
    <source>
        <dbReference type="HGNC" id="HGNC:32266"/>
    </source>
</evidence>
<proteinExistence type="inferred from homology"/>
<name>F90AI_HUMAN</name>
<accession>P0DV75</accession>
<accession>A6NE21</accession>
<keyword id="KW-1185">Reference proteome</keyword>